<organism>
    <name type="scientific">Alkalilimnicola ehrlichii (strain ATCC BAA-1101 / DSM 17681 / MLHE-1)</name>
    <dbReference type="NCBI Taxonomy" id="187272"/>
    <lineage>
        <taxon>Bacteria</taxon>
        <taxon>Pseudomonadati</taxon>
        <taxon>Pseudomonadota</taxon>
        <taxon>Gammaproteobacteria</taxon>
        <taxon>Chromatiales</taxon>
        <taxon>Ectothiorhodospiraceae</taxon>
        <taxon>Alkalilimnicola</taxon>
    </lineage>
</organism>
<accession>Q0A911</accession>
<evidence type="ECO:0000255" key="1">
    <source>
        <dbReference type="HAMAP-Rule" id="MF_00364"/>
    </source>
</evidence>
<protein>
    <recommendedName>
        <fullName evidence="1">Beta-hexosaminidase</fullName>
        <ecNumber evidence="1">3.2.1.52</ecNumber>
    </recommendedName>
    <alternativeName>
        <fullName evidence="1">Beta-N-acetylhexosaminidase</fullName>
    </alternativeName>
    <alternativeName>
        <fullName evidence="1">N-acetyl-beta-glucosaminidase</fullName>
    </alternativeName>
</protein>
<sequence>MLLGPLMMGLEGTRLSSEERTLLCHPRVGGVILFSRNFQSPEQLRALTDAIHALRRPPLLIAVDQEGGRVQRFREGFTRLPAPGVLAAVYDRDPAQARALSHDMGWLMASELLACGVDFSFAPVLDLGRGVSRVIGDRAFHSRPEAVVHLARGWVAGMRDAGMAAVGKHFPGHGSVAPDSHLELPRDPRARSALEGADLVPFRRLAGDRLPGMMTAHVIYQAIDPLPATFSGYWIGEVLRGELGYEGAVFSDDLGMAAAAEAGPLPRRARAAMEAGCDMVLLCNHPEAVPAVLRHLPDPDPVSDMRLVRLHGRPVVDNWRKLHRLTRWQEAVRRVRGQDPSPEGELEV</sequence>
<gene>
    <name evidence="1" type="primary">nagZ</name>
    <name type="ordered locus">Mlg_1327</name>
</gene>
<reference key="1">
    <citation type="submission" date="2006-08" db="EMBL/GenBank/DDBJ databases">
        <title>Complete sequence of Alkalilimnicola ehrilichei MLHE-1.</title>
        <authorList>
            <person name="Copeland A."/>
            <person name="Lucas S."/>
            <person name="Lapidus A."/>
            <person name="Barry K."/>
            <person name="Detter J.C."/>
            <person name="Glavina del Rio T."/>
            <person name="Hammon N."/>
            <person name="Israni S."/>
            <person name="Dalin E."/>
            <person name="Tice H."/>
            <person name="Pitluck S."/>
            <person name="Sims D."/>
            <person name="Brettin T."/>
            <person name="Bruce D."/>
            <person name="Han C."/>
            <person name="Tapia R."/>
            <person name="Gilna P."/>
            <person name="Schmutz J."/>
            <person name="Larimer F."/>
            <person name="Land M."/>
            <person name="Hauser L."/>
            <person name="Kyrpides N."/>
            <person name="Mikhailova N."/>
            <person name="Oremland R.S."/>
            <person name="Hoeft S.E."/>
            <person name="Switzer-Blum J."/>
            <person name="Kulp T."/>
            <person name="King G."/>
            <person name="Tabita R."/>
            <person name="Witte B."/>
            <person name="Santini J.M."/>
            <person name="Basu P."/>
            <person name="Hollibaugh J.T."/>
            <person name="Xie G."/>
            <person name="Stolz J.F."/>
            <person name="Richardson P."/>
        </authorList>
    </citation>
    <scope>NUCLEOTIDE SEQUENCE [LARGE SCALE GENOMIC DNA]</scope>
    <source>
        <strain>ATCC BAA-1101 / DSM 17681 / MLHE-1</strain>
    </source>
</reference>
<feature type="chain" id="PRO_1000005650" description="Beta-hexosaminidase">
    <location>
        <begin position="1"/>
        <end position="348"/>
    </location>
</feature>
<feature type="active site" description="Proton donor/acceptor" evidence="1">
    <location>
        <position position="181"/>
    </location>
</feature>
<feature type="active site" description="Nucleophile" evidence="1">
    <location>
        <position position="252"/>
    </location>
</feature>
<feature type="binding site" evidence="1">
    <location>
        <position position="64"/>
    </location>
    <ligand>
        <name>substrate</name>
    </ligand>
</feature>
<feature type="binding site" evidence="1">
    <location>
        <position position="72"/>
    </location>
    <ligand>
        <name>substrate</name>
    </ligand>
</feature>
<feature type="binding site" evidence="1">
    <location>
        <position position="138"/>
    </location>
    <ligand>
        <name>substrate</name>
    </ligand>
</feature>
<feature type="binding site" evidence="1">
    <location>
        <begin position="168"/>
        <end position="169"/>
    </location>
    <ligand>
        <name>substrate</name>
    </ligand>
</feature>
<feature type="site" description="Important for catalytic activity" evidence="1">
    <location>
        <position position="179"/>
    </location>
</feature>
<proteinExistence type="inferred from homology"/>
<dbReference type="EC" id="3.2.1.52" evidence="1"/>
<dbReference type="EMBL" id="CP000453">
    <property type="protein sequence ID" value="ABI56676.1"/>
    <property type="molecule type" value="Genomic_DNA"/>
</dbReference>
<dbReference type="RefSeq" id="WP_011629071.1">
    <property type="nucleotide sequence ID" value="NC_008340.1"/>
</dbReference>
<dbReference type="SMR" id="Q0A911"/>
<dbReference type="CAZy" id="GH3">
    <property type="family name" value="Glycoside Hydrolase Family 3"/>
</dbReference>
<dbReference type="KEGG" id="aeh:Mlg_1327"/>
<dbReference type="eggNOG" id="COG1472">
    <property type="taxonomic scope" value="Bacteria"/>
</dbReference>
<dbReference type="HOGENOM" id="CLU_008392_0_0_6"/>
<dbReference type="OrthoDB" id="9786661at2"/>
<dbReference type="UniPathway" id="UPA00544"/>
<dbReference type="Proteomes" id="UP000001962">
    <property type="component" value="Chromosome"/>
</dbReference>
<dbReference type="GO" id="GO:0005737">
    <property type="term" value="C:cytoplasm"/>
    <property type="evidence" value="ECO:0007669"/>
    <property type="project" value="UniProtKB-SubCell"/>
</dbReference>
<dbReference type="GO" id="GO:0004563">
    <property type="term" value="F:beta-N-acetylhexosaminidase activity"/>
    <property type="evidence" value="ECO:0007669"/>
    <property type="project" value="UniProtKB-UniRule"/>
</dbReference>
<dbReference type="GO" id="GO:0005975">
    <property type="term" value="P:carbohydrate metabolic process"/>
    <property type="evidence" value="ECO:0007669"/>
    <property type="project" value="InterPro"/>
</dbReference>
<dbReference type="GO" id="GO:0051301">
    <property type="term" value="P:cell division"/>
    <property type="evidence" value="ECO:0007669"/>
    <property type="project" value="UniProtKB-KW"/>
</dbReference>
<dbReference type="GO" id="GO:0071555">
    <property type="term" value="P:cell wall organization"/>
    <property type="evidence" value="ECO:0007669"/>
    <property type="project" value="UniProtKB-KW"/>
</dbReference>
<dbReference type="GO" id="GO:0009252">
    <property type="term" value="P:peptidoglycan biosynthetic process"/>
    <property type="evidence" value="ECO:0007669"/>
    <property type="project" value="UniProtKB-KW"/>
</dbReference>
<dbReference type="GO" id="GO:0009254">
    <property type="term" value="P:peptidoglycan turnover"/>
    <property type="evidence" value="ECO:0007669"/>
    <property type="project" value="UniProtKB-UniRule"/>
</dbReference>
<dbReference type="GO" id="GO:0008360">
    <property type="term" value="P:regulation of cell shape"/>
    <property type="evidence" value="ECO:0007669"/>
    <property type="project" value="UniProtKB-KW"/>
</dbReference>
<dbReference type="Gene3D" id="3.20.20.300">
    <property type="entry name" value="Glycoside hydrolase, family 3, N-terminal domain"/>
    <property type="match status" value="1"/>
</dbReference>
<dbReference type="HAMAP" id="MF_00364">
    <property type="entry name" value="NagZ"/>
    <property type="match status" value="1"/>
</dbReference>
<dbReference type="InterPro" id="IPR022956">
    <property type="entry name" value="Beta_hexosaminidase_bac"/>
</dbReference>
<dbReference type="InterPro" id="IPR001764">
    <property type="entry name" value="Glyco_hydro_3_N"/>
</dbReference>
<dbReference type="InterPro" id="IPR036962">
    <property type="entry name" value="Glyco_hydro_3_N_sf"/>
</dbReference>
<dbReference type="InterPro" id="IPR017853">
    <property type="entry name" value="Glycoside_hydrolase_SF"/>
</dbReference>
<dbReference type="InterPro" id="IPR050226">
    <property type="entry name" value="NagZ_Beta-hexosaminidase"/>
</dbReference>
<dbReference type="NCBIfam" id="NF003740">
    <property type="entry name" value="PRK05337.1"/>
    <property type="match status" value="1"/>
</dbReference>
<dbReference type="PANTHER" id="PTHR30480:SF13">
    <property type="entry name" value="BETA-HEXOSAMINIDASE"/>
    <property type="match status" value="1"/>
</dbReference>
<dbReference type="PANTHER" id="PTHR30480">
    <property type="entry name" value="BETA-HEXOSAMINIDASE-RELATED"/>
    <property type="match status" value="1"/>
</dbReference>
<dbReference type="Pfam" id="PF00933">
    <property type="entry name" value="Glyco_hydro_3"/>
    <property type="match status" value="1"/>
</dbReference>
<dbReference type="SUPFAM" id="SSF51445">
    <property type="entry name" value="(Trans)glycosidases"/>
    <property type="match status" value="1"/>
</dbReference>
<keyword id="KW-0131">Cell cycle</keyword>
<keyword id="KW-0132">Cell division</keyword>
<keyword id="KW-0133">Cell shape</keyword>
<keyword id="KW-0961">Cell wall biogenesis/degradation</keyword>
<keyword id="KW-0963">Cytoplasm</keyword>
<keyword id="KW-0326">Glycosidase</keyword>
<keyword id="KW-0378">Hydrolase</keyword>
<keyword id="KW-0573">Peptidoglycan synthesis</keyword>
<keyword id="KW-1185">Reference proteome</keyword>
<name>NAGZ_ALKEH</name>
<comment type="function">
    <text evidence="1">Plays a role in peptidoglycan recycling by cleaving the terminal beta-1,4-linked N-acetylglucosamine (GlcNAc) from peptide-linked peptidoglycan fragments, giving rise to free GlcNAc, anhydro-N-acetylmuramic acid and anhydro-N-acetylmuramic acid-linked peptides.</text>
</comment>
<comment type="catalytic activity">
    <reaction evidence="1">
        <text>Hydrolysis of terminal non-reducing N-acetyl-D-hexosamine residues in N-acetyl-beta-D-hexosaminides.</text>
        <dbReference type="EC" id="3.2.1.52"/>
    </reaction>
</comment>
<comment type="pathway">
    <text evidence="1">Cell wall biogenesis; peptidoglycan recycling.</text>
</comment>
<comment type="subcellular location">
    <subcellularLocation>
        <location evidence="1">Cytoplasm</location>
    </subcellularLocation>
</comment>
<comment type="similarity">
    <text evidence="1">Belongs to the glycosyl hydrolase 3 family. NagZ subfamily.</text>
</comment>